<dbReference type="EMBL" id="X14057">
    <property type="protein sequence ID" value="CAA32213.1"/>
    <property type="molecule type" value="Genomic_RNA"/>
</dbReference>
<dbReference type="EMBL" id="X14057">
    <property type="protein sequence ID" value="CAA32215.1"/>
    <property type="status" value="ALT_SEQ"/>
    <property type="molecule type" value="Genomic_RNA"/>
</dbReference>
<dbReference type="SMR" id="P12472"/>
<dbReference type="Proteomes" id="UP000007179">
    <property type="component" value="Genome"/>
</dbReference>
<dbReference type="GO" id="GO:0039616">
    <property type="term" value="C:T=2 icosahedral viral capsid"/>
    <property type="evidence" value="ECO:0007669"/>
    <property type="project" value="UniProtKB-UniRule"/>
</dbReference>
<dbReference type="GO" id="GO:0039625">
    <property type="term" value="C:viral inner capsid"/>
    <property type="evidence" value="ECO:0007669"/>
    <property type="project" value="UniProtKB-UniRule"/>
</dbReference>
<dbReference type="GO" id="GO:0019013">
    <property type="term" value="C:viral nucleocapsid"/>
    <property type="evidence" value="ECO:0007669"/>
    <property type="project" value="UniProtKB-UniRule"/>
</dbReference>
<dbReference type="GO" id="GO:0003723">
    <property type="term" value="F:RNA binding"/>
    <property type="evidence" value="ECO:0007669"/>
    <property type="project" value="UniProtKB-UniRule"/>
</dbReference>
<dbReference type="HAMAP" id="MF_04123">
    <property type="entry name" value="Rota_VP2"/>
    <property type="match status" value="1"/>
</dbReference>
<dbReference type="HAMAP" id="MF_04127">
    <property type="entry name" value="Rota_VP2_A"/>
    <property type="match status" value="1"/>
</dbReference>
<dbReference type="InterPro" id="IPR007779">
    <property type="entry name" value="Rotavirus_VP2"/>
</dbReference>
<dbReference type="Pfam" id="PF05087">
    <property type="entry name" value="Rota_VP2"/>
    <property type="match status" value="1"/>
</dbReference>
<evidence type="ECO:0000255" key="1">
    <source>
        <dbReference type="HAMAP-Rule" id="MF_04127"/>
    </source>
</evidence>
<evidence type="ECO:0000256" key="2">
    <source>
        <dbReference type="SAM" id="MobiDB-lite"/>
    </source>
</evidence>
<evidence type="ECO:0000269" key="3">
    <source>
    </source>
</evidence>
<evidence type="ECO:0000269" key="4">
    <source>
    </source>
</evidence>
<evidence type="ECO:0000269" key="5">
    <source>
    </source>
</evidence>
<evidence type="ECO:0000269" key="6">
    <source>
    </source>
</evidence>
<proteinExistence type="evidence at protein level"/>
<name>VP2_ROTRF</name>
<protein>
    <recommendedName>
        <fullName evidence="1">Inner capsid protein VP2</fullName>
    </recommendedName>
</protein>
<organism>
    <name type="scientific">Rotavirus A (strain RVA/Cow/France/RF/1975/G6P6[1])</name>
    <name type="common">RV-A</name>
    <dbReference type="NCBI Taxonomy" id="10933"/>
    <lineage>
        <taxon>Viruses</taxon>
        <taxon>Riboviria</taxon>
        <taxon>Orthornavirae</taxon>
        <taxon>Duplornaviricota</taxon>
        <taxon>Resentoviricetes</taxon>
        <taxon>Reovirales</taxon>
        <taxon>Sedoreoviridae</taxon>
        <taxon>Rotavirus</taxon>
        <taxon>Rotavirus A</taxon>
    </lineage>
</organism>
<sequence length="880" mass="102496">MAYRKRGARREANINNNDRMQEKDDEKQDQNNRMQLSDKVLSKKEEVVTDSQEEIKIADEVKKSTKEESKQLLEVLKTKEEHQKEIQYEILQKTIPTFEPKESILKKLEDIKPEQAKKQTKLFRIFEPRQLPIYRANGEKELRNRWYWKLKKDTLPDGDYDVREYFLNLYDQVLTEMPDYLLLKDMAVENKNSRDAGKVVDSETASICDAIFQDEETEGAVRRFIAEMRQRVQADRNVVNYPSILHPIDYAFNEYFLQHQLVEPLNNDIIFNYIPERIRNDVNYILNMDRNLPSTARYIRPNLLQDRLNLHDNFESLWDTITTSNYILARSVVPDLKELVSTEAQIQKMSQDLQLEALTIQSETQFLTGINSQAANDCFKTLIAAMLSQRTMSLDFVTTNYMSLISGMWLLTVVPNDMFIRESLVACQLAIVNTIIYPAFGMQRMHYRNGDPQRPFQIAEQQIQNFQVANWLHFVNNNQFRQVVIDGVLNQVLNDNIRNGHVINQLMEALMQLSRQQFPTMPVDYKRSIQRGILLLSNRLGQLVDLTRLLAYNYETLMACVTMNMQHVQTLTTEKLQLTSVTSLCMLIGNATVIPSPQTLFHYYNVNVNFHSNYNERINDAVAIITGANRLNLYQKKMKAIVEDFLKRLHIFDVARVPDDQMYRLRDRLRLLPVEVRRLDIFNLILMNMDQIERASDKIAQGVIIAYRDMQLERDEMYGYVNIARNLDGFQQINLEELMRTGDYAQITNMLLNNQPVALVGALPFVTDSSVISLIANVDATVFAQIVKLRKVDTLKPILYKINSDSNDFYLVANYDWVPTSTTKVYKQVPQQFDFRNSMHMLTSNLTFTVYSDLLAFVSADTVEPINAVAFDNMRIMNEL</sequence>
<comment type="function">
    <text evidence="1">Inner capsid protein that self-assembles to form an icosahedral capsid with a T=2 symmetry, which consists of 120 copies of VP2, with channels at each of its five-fold vertices. This capsid constitutes the innermost concentric layer of the viral mature particle. It encapsidates the polymerase VP1, the capping enzyme VP3 and the genomic dsRNA, thereby defining the core. The innermost VP2 capsid and the intermediate VP6 capsid remain intact following cell entry to protect the dsRNA from degradation and to prevent unfavorable antiviral responses in the host cell during all the replication cycle of the virus. Nascent transcripts are transcribed within the structural confines of this double-layered particle (DLP) and are extruded through the channels formed by VP2 N-termini. VP2 is required for the replicase activity of VP1 polymerase. Probably recruits a copy of a VP1-VP3 complex, potentially along with a segment of plus-strand RNA, as a decamer of VP2 assembles. May activate the autoinhibited VP1/RNA complex to coordinate packaging and genome replication.</text>
</comment>
<comment type="subunit">
    <text evidence="1 3 4">Homodecamer; each decamer is made up of two conformers of VP2, called VP2A and VP2B (By similarity). Interacts with a VP1-VP3 complex (By similarity). Interacts with the intermediate capsid protein VP6 (PubMed:12097594). Interacts with NSP5 (PubMed:12525609). Interacts (via N-terminus) with NSP2 (By similarity).</text>
</comment>
<comment type="subcellular location">
    <subcellularLocation>
        <location evidence="1">Virion</location>
    </subcellularLocation>
    <text evidence="1">Inner capsid protein. Also found in spherical cytoplasmic structures, called virus factories, that appear early after infection and are the site of viral replication and packaging.</text>
</comment>
<comment type="domain">
    <text evidence="1 5 6">The N-terminus binds RNA (PubMed:7996135). It is necessary for encapsidation of VP1 and VP3 (PubMed:9420216). The N-termini of 10 VP2 molecules form a cylindrical hub underneath each 5-fold axis of the inner capsid (By similarity).</text>
</comment>
<comment type="PTM">
    <text evidence="1">Sumoylated with SUMO1 and SUMO2. Sumoylation of viral proteins seems to have a positive role on viral replication.</text>
</comment>
<comment type="similarity">
    <text evidence="1">Belongs to the rotavirus VP2 family.</text>
</comment>
<feature type="chain" id="PRO_0000149531" description="Inner capsid protein VP2">
    <location>
        <begin position="1"/>
        <end position="880"/>
    </location>
</feature>
<feature type="region of interest" description="5-fold hub; involved in the encapsidation of VP1 and VP3" evidence="1 6">
    <location>
        <begin position="1"/>
        <end position="80"/>
    </location>
</feature>
<feature type="region of interest" description="Disordered" evidence="2">
    <location>
        <begin position="1"/>
        <end position="43"/>
    </location>
</feature>
<feature type="region of interest" description="Hydrophobic" evidence="1">
    <location>
        <begin position="394"/>
        <end position="414"/>
    </location>
</feature>
<feature type="region of interest" description="Hydrophobic" evidence="1">
    <location>
        <begin position="422"/>
        <end position="442"/>
    </location>
</feature>
<feature type="compositionally biased region" description="Basic and acidic residues" evidence="2">
    <location>
        <begin position="19"/>
        <end position="30"/>
    </location>
</feature>
<feature type="site" description="Interaction with the intermediate capsid protein VP6" evidence="1">
    <location>
        <position position="220"/>
    </location>
</feature>
<feature type="site" description="Interaction with the intermediate capsid protein VP6" evidence="1">
    <location>
        <position position="224"/>
    </location>
</feature>
<feature type="site" description="Interaction with the intermediate capsid protein VP6" evidence="1">
    <location>
        <position position="228"/>
    </location>
</feature>
<feature type="site" description="Interaction with the intermediate capsid protein VP6" evidence="1">
    <location>
        <position position="839"/>
    </location>
</feature>
<feature type="site" description="Interaction with the intermediate capsid protein VP6" evidence="1">
    <location>
        <position position="841"/>
    </location>
</feature>
<accession>P12472</accession>
<accession>Q86225</accession>
<keyword id="KW-0167">Capsid protein</keyword>
<keyword id="KW-1153">Inner capsid protein</keyword>
<keyword id="KW-0677">Repeat</keyword>
<keyword id="KW-0694">RNA-binding</keyword>
<keyword id="KW-1141">T=2 icosahedral capsid protein</keyword>
<keyword id="KW-0832">Ubl conjugation</keyword>
<keyword id="KW-0946">Virion</keyword>
<reference key="1">
    <citation type="journal article" date="1989" name="Nucleic Acids Res.">
        <title>Nucleotide sequence of the gene encoding for the RNA binding protein (VP2) of RF bovine rotavirus.</title>
        <authorList>
            <person name="Kumar A."/>
            <person name="Charpilienne A."/>
            <person name="Cohen J."/>
        </authorList>
    </citation>
    <scope>NUCLEOTIDE SEQUENCE [GENOMIC RNA]</scope>
</reference>
<reference key="2">
    <citation type="journal article" date="1994" name="J. Gen. Virol.">
        <title>Identification of the nucleic acid binding domain of the rotavirus VP2 protein.</title>
        <authorList>
            <person name="Labbe M."/>
            <person name="Baudoux P."/>
            <person name="Charpilienne A."/>
            <person name="Poncet D."/>
            <person name="Cohen J."/>
        </authorList>
    </citation>
    <scope>RNA-BINDING</scope>
    <scope>DOMAIN</scope>
</reference>
<reference key="3">
    <citation type="journal article" date="1998" name="J. Virol.">
        <title>The N terminus of rotavirus VP2 is necessary for encapsidation of VP1 and VP3.</title>
        <authorList>
            <person name="Zeng C.Q.-Y."/>
            <person name="Estes M.K."/>
            <person name="Charpilienne A."/>
            <person name="Cohen J."/>
        </authorList>
    </citation>
    <scope>DOMAIN</scope>
</reference>
<reference key="4">
    <citation type="journal article" date="2002" name="J. Virol.">
        <title>Identification of rotavirus VP6 residues located at the interface with VP2 that are essential for capsid assembly and transcriptase activity.</title>
        <authorList>
            <person name="Charpilienne A."/>
            <person name="Lepault J."/>
            <person name="Rey F.A."/>
            <person name="Cohen J."/>
        </authorList>
    </citation>
    <scope>INTERACTION WITH THE INTERMEDIATE CAPSID PROTEIN VP6</scope>
</reference>
<reference key="5">
    <citation type="journal article" date="2003" name="J. Virol.">
        <title>Rotavirus nonstructural protein NSP5 interacts with major core protein VP2.</title>
        <authorList>
            <person name="Berois M."/>
            <person name="Sapin C."/>
            <person name="Erk I."/>
            <person name="Poncet D."/>
            <person name="Cohen J."/>
        </authorList>
    </citation>
    <scope>INTERACTION WITH NSP5</scope>
</reference>
<organismHost>
    <name type="scientific">Bos taurus</name>
    <name type="common">Bovine</name>
    <dbReference type="NCBI Taxonomy" id="9913"/>
</organismHost>